<dbReference type="EC" id="7.3.2.1" evidence="1"/>
<dbReference type="EMBL" id="AE016822">
    <property type="protein sequence ID" value="AAT89582.1"/>
    <property type="molecule type" value="Genomic_DNA"/>
</dbReference>
<dbReference type="RefSeq" id="WP_011186570.1">
    <property type="nucleotide sequence ID" value="NC_006087.1"/>
</dbReference>
<dbReference type="SMR" id="Q6ADG4"/>
<dbReference type="STRING" id="281090.Lxx18450"/>
<dbReference type="KEGG" id="lxx:Lxx18450"/>
<dbReference type="eggNOG" id="COG1117">
    <property type="taxonomic scope" value="Bacteria"/>
</dbReference>
<dbReference type="HOGENOM" id="CLU_000604_1_22_11"/>
<dbReference type="Proteomes" id="UP000001306">
    <property type="component" value="Chromosome"/>
</dbReference>
<dbReference type="GO" id="GO:0005886">
    <property type="term" value="C:plasma membrane"/>
    <property type="evidence" value="ECO:0007669"/>
    <property type="project" value="UniProtKB-SubCell"/>
</dbReference>
<dbReference type="GO" id="GO:0005524">
    <property type="term" value="F:ATP binding"/>
    <property type="evidence" value="ECO:0007669"/>
    <property type="project" value="UniProtKB-KW"/>
</dbReference>
<dbReference type="GO" id="GO:0016887">
    <property type="term" value="F:ATP hydrolysis activity"/>
    <property type="evidence" value="ECO:0007669"/>
    <property type="project" value="InterPro"/>
</dbReference>
<dbReference type="GO" id="GO:0015415">
    <property type="term" value="F:ATPase-coupled phosphate ion transmembrane transporter activity"/>
    <property type="evidence" value="ECO:0007669"/>
    <property type="project" value="UniProtKB-EC"/>
</dbReference>
<dbReference type="GO" id="GO:0035435">
    <property type="term" value="P:phosphate ion transmembrane transport"/>
    <property type="evidence" value="ECO:0007669"/>
    <property type="project" value="InterPro"/>
</dbReference>
<dbReference type="CDD" id="cd03260">
    <property type="entry name" value="ABC_PstB_phosphate_transporter"/>
    <property type="match status" value="1"/>
</dbReference>
<dbReference type="Gene3D" id="3.40.50.300">
    <property type="entry name" value="P-loop containing nucleotide triphosphate hydrolases"/>
    <property type="match status" value="1"/>
</dbReference>
<dbReference type="InterPro" id="IPR003593">
    <property type="entry name" value="AAA+_ATPase"/>
</dbReference>
<dbReference type="InterPro" id="IPR003439">
    <property type="entry name" value="ABC_transporter-like_ATP-bd"/>
</dbReference>
<dbReference type="InterPro" id="IPR017871">
    <property type="entry name" value="ABC_transporter-like_CS"/>
</dbReference>
<dbReference type="InterPro" id="IPR027417">
    <property type="entry name" value="P-loop_NTPase"/>
</dbReference>
<dbReference type="InterPro" id="IPR005670">
    <property type="entry name" value="PstB-like"/>
</dbReference>
<dbReference type="NCBIfam" id="TIGR00972">
    <property type="entry name" value="3a0107s01c2"/>
    <property type="match status" value="1"/>
</dbReference>
<dbReference type="PANTHER" id="PTHR43423">
    <property type="entry name" value="ABC TRANSPORTER I FAMILY MEMBER 17"/>
    <property type="match status" value="1"/>
</dbReference>
<dbReference type="PANTHER" id="PTHR43423:SF1">
    <property type="entry name" value="ABC TRANSPORTER I FAMILY MEMBER 17"/>
    <property type="match status" value="1"/>
</dbReference>
<dbReference type="Pfam" id="PF00005">
    <property type="entry name" value="ABC_tran"/>
    <property type="match status" value="1"/>
</dbReference>
<dbReference type="SMART" id="SM00382">
    <property type="entry name" value="AAA"/>
    <property type="match status" value="1"/>
</dbReference>
<dbReference type="SUPFAM" id="SSF52540">
    <property type="entry name" value="P-loop containing nucleoside triphosphate hydrolases"/>
    <property type="match status" value="1"/>
</dbReference>
<dbReference type="PROSITE" id="PS00211">
    <property type="entry name" value="ABC_TRANSPORTER_1"/>
    <property type="match status" value="1"/>
</dbReference>
<dbReference type="PROSITE" id="PS50893">
    <property type="entry name" value="ABC_TRANSPORTER_2"/>
    <property type="match status" value="1"/>
</dbReference>
<dbReference type="PROSITE" id="PS51238">
    <property type="entry name" value="PSTB"/>
    <property type="match status" value="1"/>
</dbReference>
<keyword id="KW-0067">ATP-binding</keyword>
<keyword id="KW-1003">Cell membrane</keyword>
<keyword id="KW-0472">Membrane</keyword>
<keyword id="KW-0547">Nucleotide-binding</keyword>
<keyword id="KW-0592">Phosphate transport</keyword>
<keyword id="KW-1185">Reference proteome</keyword>
<keyword id="KW-1278">Translocase</keyword>
<keyword id="KW-0813">Transport</keyword>
<sequence>MSKRIEVNDLNVYYGKFHAVEDVSLTIEPRSVTAFIGPSGCGKSTFLRTLNRMHEVIPGAYVEGEVLIDGNNLYGAGVDPVLVRRQVGMVFQRPNPFPTMSIRDNVLAGVKLNNHRISKTDADDLVEGSLRGANLWNEVKDRLNLPGSGLSGGQQQRLCIARAIAVSPDVLLMDEPCSALDPISTLAIEDLIEELKNDYTIVIVTHNMQQASRVSDRTAFFTIAGTGKPGKLIEYNDTNIIFSNPSAQATEDYVSGRFG</sequence>
<proteinExistence type="inferred from homology"/>
<reference key="1">
    <citation type="journal article" date="2004" name="Mol. Plant Microbe Interact.">
        <title>The genome sequence of the Gram-positive sugarcane pathogen Leifsonia xyli subsp. xyli.</title>
        <authorList>
            <person name="Monteiro-Vitorello C.B."/>
            <person name="Camargo L.E.A."/>
            <person name="Van Sluys M.A."/>
            <person name="Kitajima J.P."/>
            <person name="Truffi D."/>
            <person name="do Amaral A.M."/>
            <person name="Harakava R."/>
            <person name="de Oliveira J.C.F."/>
            <person name="Wood D."/>
            <person name="de Oliveira M.C."/>
            <person name="Miyaki C.Y."/>
            <person name="Takita M.A."/>
            <person name="da Silva A.C.R."/>
            <person name="Furlan L.R."/>
            <person name="Carraro D.M."/>
            <person name="Camarotte G."/>
            <person name="Almeida N.F. Jr."/>
            <person name="Carrer H."/>
            <person name="Coutinho L.L."/>
            <person name="El-Dorry H.A."/>
            <person name="Ferro M.I.T."/>
            <person name="Gagliardi P.R."/>
            <person name="Giglioti E."/>
            <person name="Goldman M.H.S."/>
            <person name="Goldman G.H."/>
            <person name="Kimura E.T."/>
            <person name="Ferro E.S."/>
            <person name="Kuramae E.E."/>
            <person name="Lemos E.G.M."/>
            <person name="Lemos M.V.F."/>
            <person name="Mauro S.M.Z."/>
            <person name="Machado M.A."/>
            <person name="Marino C.L."/>
            <person name="Menck C.F."/>
            <person name="Nunes L.R."/>
            <person name="Oliveira R.C."/>
            <person name="Pereira G.G."/>
            <person name="Siqueira W."/>
            <person name="de Souza A.A."/>
            <person name="Tsai S.M."/>
            <person name="Zanca A.S."/>
            <person name="Simpson A.J.G."/>
            <person name="Brumbley S.M."/>
            <person name="Setubal J.C."/>
        </authorList>
    </citation>
    <scope>NUCLEOTIDE SEQUENCE [LARGE SCALE GENOMIC DNA]</scope>
    <source>
        <strain>CTCB07</strain>
    </source>
</reference>
<accession>Q6ADG4</accession>
<organism>
    <name type="scientific">Leifsonia xyli subsp. xyli (strain CTCB07)</name>
    <dbReference type="NCBI Taxonomy" id="281090"/>
    <lineage>
        <taxon>Bacteria</taxon>
        <taxon>Bacillati</taxon>
        <taxon>Actinomycetota</taxon>
        <taxon>Actinomycetes</taxon>
        <taxon>Micrococcales</taxon>
        <taxon>Microbacteriaceae</taxon>
        <taxon>Leifsonia</taxon>
    </lineage>
</organism>
<gene>
    <name evidence="1" type="primary">pstB</name>
    <name type="ordered locus">Lxx18450</name>
</gene>
<name>PSTB_LEIXX</name>
<evidence type="ECO:0000255" key="1">
    <source>
        <dbReference type="HAMAP-Rule" id="MF_01702"/>
    </source>
</evidence>
<comment type="function">
    <text evidence="1">Part of the ABC transporter complex PstSACB involved in phosphate import. Responsible for energy coupling to the transport system.</text>
</comment>
<comment type="catalytic activity">
    <reaction evidence="1">
        <text>phosphate(out) + ATP + H2O = ADP + 2 phosphate(in) + H(+)</text>
        <dbReference type="Rhea" id="RHEA:24440"/>
        <dbReference type="ChEBI" id="CHEBI:15377"/>
        <dbReference type="ChEBI" id="CHEBI:15378"/>
        <dbReference type="ChEBI" id="CHEBI:30616"/>
        <dbReference type="ChEBI" id="CHEBI:43474"/>
        <dbReference type="ChEBI" id="CHEBI:456216"/>
        <dbReference type="EC" id="7.3.2.1"/>
    </reaction>
</comment>
<comment type="subunit">
    <text evidence="1">The complex is composed of two ATP-binding proteins (PstB), two transmembrane proteins (PstC and PstA) and a solute-binding protein (PstS).</text>
</comment>
<comment type="subcellular location">
    <subcellularLocation>
        <location evidence="1">Cell membrane</location>
        <topology evidence="1">Peripheral membrane protein</topology>
    </subcellularLocation>
</comment>
<comment type="similarity">
    <text evidence="1">Belongs to the ABC transporter superfamily. Phosphate importer (TC 3.A.1.7) family.</text>
</comment>
<feature type="chain" id="PRO_0000092828" description="Phosphate import ATP-binding protein PstB">
    <location>
        <begin position="1"/>
        <end position="259"/>
    </location>
</feature>
<feature type="domain" description="ABC transporter" evidence="1">
    <location>
        <begin position="5"/>
        <end position="248"/>
    </location>
</feature>
<feature type="binding site" evidence="1">
    <location>
        <begin position="37"/>
        <end position="44"/>
    </location>
    <ligand>
        <name>ATP</name>
        <dbReference type="ChEBI" id="CHEBI:30616"/>
    </ligand>
</feature>
<protein>
    <recommendedName>
        <fullName evidence="1">Phosphate import ATP-binding protein PstB</fullName>
        <ecNumber evidence="1">7.3.2.1</ecNumber>
    </recommendedName>
    <alternativeName>
        <fullName evidence="1">ABC phosphate transporter</fullName>
    </alternativeName>
    <alternativeName>
        <fullName evidence="1">Phosphate-transporting ATPase</fullName>
    </alternativeName>
</protein>